<evidence type="ECO:0000250" key="1">
    <source>
        <dbReference type="UniProtKB" id="P68363"/>
    </source>
</evidence>
<evidence type="ECO:0000250" key="2">
    <source>
        <dbReference type="UniProtKB" id="Q13509"/>
    </source>
</evidence>
<evidence type="ECO:0000269" key="3">
    <source>
    </source>
</evidence>
<evidence type="ECO:0000269" key="4">
    <source>
    </source>
</evidence>
<evidence type="ECO:0000305" key="5"/>
<organism>
    <name type="scientific">Oryza sativa subsp. japonica</name>
    <name type="common">Rice</name>
    <dbReference type="NCBI Taxonomy" id="39947"/>
    <lineage>
        <taxon>Eukaryota</taxon>
        <taxon>Viridiplantae</taxon>
        <taxon>Streptophyta</taxon>
        <taxon>Embryophyta</taxon>
        <taxon>Tracheophyta</taxon>
        <taxon>Spermatophyta</taxon>
        <taxon>Magnoliopsida</taxon>
        <taxon>Liliopsida</taxon>
        <taxon>Poales</taxon>
        <taxon>Poaceae</taxon>
        <taxon>BOP clade</taxon>
        <taxon>Oryzoideae</taxon>
        <taxon>Oryzeae</taxon>
        <taxon>Oryzinae</taxon>
        <taxon>Oryza</taxon>
        <taxon>Oryza sativa</taxon>
    </lineage>
</organism>
<feature type="chain" id="PRO_0000048369" description="Tubulin beta-7 chain">
    <location>
        <begin position="1"/>
        <end position="444"/>
    </location>
</feature>
<feature type="binding site" evidence="2">
    <location>
        <position position="11"/>
    </location>
    <ligand>
        <name>GTP</name>
        <dbReference type="ChEBI" id="CHEBI:37565"/>
    </ligand>
</feature>
<feature type="binding site" evidence="1">
    <location>
        <position position="69"/>
    </location>
    <ligand>
        <name>GTP</name>
        <dbReference type="ChEBI" id="CHEBI:37565"/>
    </ligand>
</feature>
<feature type="binding site" evidence="1">
    <location>
        <position position="69"/>
    </location>
    <ligand>
        <name>Mg(2+)</name>
        <dbReference type="ChEBI" id="CHEBI:18420"/>
    </ligand>
</feature>
<feature type="binding site" evidence="2">
    <location>
        <position position="138"/>
    </location>
    <ligand>
        <name>GTP</name>
        <dbReference type="ChEBI" id="CHEBI:37565"/>
    </ligand>
</feature>
<feature type="binding site" evidence="2">
    <location>
        <position position="142"/>
    </location>
    <ligand>
        <name>GTP</name>
        <dbReference type="ChEBI" id="CHEBI:37565"/>
    </ligand>
</feature>
<feature type="binding site" evidence="2">
    <location>
        <position position="143"/>
    </location>
    <ligand>
        <name>GTP</name>
        <dbReference type="ChEBI" id="CHEBI:37565"/>
    </ligand>
</feature>
<feature type="binding site" evidence="2">
    <location>
        <position position="144"/>
    </location>
    <ligand>
        <name>GTP</name>
        <dbReference type="ChEBI" id="CHEBI:37565"/>
    </ligand>
</feature>
<feature type="binding site" evidence="2">
    <location>
        <position position="204"/>
    </location>
    <ligand>
        <name>GTP</name>
        <dbReference type="ChEBI" id="CHEBI:37565"/>
    </ligand>
</feature>
<feature type="binding site" evidence="2">
    <location>
        <position position="226"/>
    </location>
    <ligand>
        <name>GTP</name>
        <dbReference type="ChEBI" id="CHEBI:37565"/>
    </ligand>
</feature>
<feature type="sequence conflict" description="In Ref. 1; BAA02505." evidence="5" ref="1">
    <original>A</original>
    <variation>T</variation>
    <location>
        <position position="63"/>
    </location>
</feature>
<proteinExistence type="evidence at transcript level"/>
<gene>
    <name type="primary">TUBB7</name>
    <name type="synonym">TUB7</name>
    <name type="ordered locus">Os03g0780600</name>
    <name type="ordered locus">LOC_Os03g56810</name>
    <name type="ORF">OSJNBa0091J19.2</name>
</gene>
<keyword id="KW-0963">Cytoplasm</keyword>
<keyword id="KW-0206">Cytoskeleton</keyword>
<keyword id="KW-0342">GTP-binding</keyword>
<keyword id="KW-0460">Magnesium</keyword>
<keyword id="KW-0479">Metal-binding</keyword>
<keyword id="KW-0493">Microtubule</keyword>
<keyword id="KW-0547">Nucleotide-binding</keyword>
<keyword id="KW-1185">Reference proteome</keyword>
<accession>P37832</accession>
<accession>Q10CU1</accession>
<accession>Q9AY74</accession>
<sequence length="444" mass="49822">MREILHIQGGQCGNQIGAKFWEVICDEHGVDATGRYAGDSDLQLERINVYYNEASGGRYVPRAVLMDLEPGTMDSVRSGPFGQIFRPDNFVFGQSGAGNNWAKGHYTEGAELIDSVLDVVRKEAENCDCLQGFQVCHSLGGGTGSGMGTLLISKIREEYPDRMMLTFSVFPSPKVSDTVVEPYNATLSVHQLVENADECMVLDNEALYDICFRTLKLATPTFGDLNHLISATMSGVTCCLRFPGQLNSDLRKLAVNLIPFPRLHFFMVGFAPLTSRGSQQYRALTVPELTQQMWDAKNMMCAADPRHGRYLTASAMFRGKMSTKEVDEQMLNVQNKNSSYFVEWIPNNVKSSVCDIPPRGLKMAATFVGNSTSIQEMFRRVSEQFTAMFRRKAFLHWYTGEGMDEMEFTEAESNMNDLVAEYQQYQDATADEEYEDEEEEAEAE</sequence>
<protein>
    <recommendedName>
        <fullName>Tubulin beta-7 chain</fullName>
    </recommendedName>
    <alternativeName>
        <fullName>Beta-7-tubulin</fullName>
    </alternativeName>
    <alternativeName>
        <fullName>pTUB22</fullName>
    </alternativeName>
</protein>
<dbReference type="EMBL" id="D13224">
    <property type="protein sequence ID" value="BAA02505.1"/>
    <property type="molecule type" value="mRNA"/>
</dbReference>
<dbReference type="EMBL" id="AC084320">
    <property type="protein sequence ID" value="AAK09229.1"/>
    <property type="molecule type" value="Genomic_DNA"/>
</dbReference>
<dbReference type="EMBL" id="DP000009">
    <property type="protein sequence ID" value="ABF99177.1"/>
    <property type="molecule type" value="Genomic_DNA"/>
</dbReference>
<dbReference type="EMBL" id="DP000009">
    <property type="protein sequence ID" value="ABF99178.1"/>
    <property type="molecule type" value="Genomic_DNA"/>
</dbReference>
<dbReference type="EMBL" id="AP008209">
    <property type="protein sequence ID" value="BAF13365.1"/>
    <property type="molecule type" value="Genomic_DNA"/>
</dbReference>
<dbReference type="EMBL" id="AP014959">
    <property type="protein sequence ID" value="BAS86674.1"/>
    <property type="molecule type" value="Genomic_DNA"/>
</dbReference>
<dbReference type="EMBL" id="AK120180">
    <property type="protein sequence ID" value="BAG99904.1"/>
    <property type="molecule type" value="mRNA"/>
</dbReference>
<dbReference type="PIR" id="JC2518">
    <property type="entry name" value="JC2518"/>
</dbReference>
<dbReference type="RefSeq" id="XP_015631085.1">
    <property type="nucleotide sequence ID" value="XM_015775599.1"/>
</dbReference>
<dbReference type="SMR" id="P37832"/>
<dbReference type="BioGRID" id="803346">
    <property type="interactions" value="1"/>
</dbReference>
<dbReference type="FunCoup" id="P37832">
    <property type="interactions" value="1743"/>
</dbReference>
<dbReference type="STRING" id="39947.P37832"/>
<dbReference type="PaxDb" id="39947-P37832"/>
<dbReference type="EnsemblPlants" id="Os03t0780600-01">
    <property type="protein sequence ID" value="Os03t0780600-01"/>
    <property type="gene ID" value="Os03g0780600"/>
</dbReference>
<dbReference type="Gramene" id="Os03t0780600-01">
    <property type="protein sequence ID" value="Os03t0780600-01"/>
    <property type="gene ID" value="Os03g0780600"/>
</dbReference>
<dbReference type="KEGG" id="dosa:Os03g0780600"/>
<dbReference type="eggNOG" id="KOG1375">
    <property type="taxonomic scope" value="Eukaryota"/>
</dbReference>
<dbReference type="HOGENOM" id="CLU_015718_1_1_1"/>
<dbReference type="InParanoid" id="P37832"/>
<dbReference type="OMA" id="GARPIHR"/>
<dbReference type="OrthoDB" id="732292at2759"/>
<dbReference type="Proteomes" id="UP000000763">
    <property type="component" value="Chromosome 3"/>
</dbReference>
<dbReference type="Proteomes" id="UP000059680">
    <property type="component" value="Chromosome 3"/>
</dbReference>
<dbReference type="GO" id="GO:0005737">
    <property type="term" value="C:cytoplasm"/>
    <property type="evidence" value="ECO:0000318"/>
    <property type="project" value="GO_Central"/>
</dbReference>
<dbReference type="GO" id="GO:0005874">
    <property type="term" value="C:microtubule"/>
    <property type="evidence" value="ECO:0000318"/>
    <property type="project" value="GO_Central"/>
</dbReference>
<dbReference type="GO" id="GO:0005525">
    <property type="term" value="F:GTP binding"/>
    <property type="evidence" value="ECO:0000318"/>
    <property type="project" value="GO_Central"/>
</dbReference>
<dbReference type="GO" id="GO:0003924">
    <property type="term" value="F:GTPase activity"/>
    <property type="evidence" value="ECO:0007669"/>
    <property type="project" value="InterPro"/>
</dbReference>
<dbReference type="GO" id="GO:0046872">
    <property type="term" value="F:metal ion binding"/>
    <property type="evidence" value="ECO:0007669"/>
    <property type="project" value="UniProtKB-KW"/>
</dbReference>
<dbReference type="GO" id="GO:0005200">
    <property type="term" value="F:structural constituent of cytoskeleton"/>
    <property type="evidence" value="ECO:0000318"/>
    <property type="project" value="GO_Central"/>
</dbReference>
<dbReference type="GO" id="GO:0000226">
    <property type="term" value="P:microtubule cytoskeleton organization"/>
    <property type="evidence" value="ECO:0000318"/>
    <property type="project" value="GO_Central"/>
</dbReference>
<dbReference type="GO" id="GO:0000278">
    <property type="term" value="P:mitotic cell cycle"/>
    <property type="evidence" value="ECO:0000318"/>
    <property type="project" value="GO_Central"/>
</dbReference>
<dbReference type="CDD" id="cd02187">
    <property type="entry name" value="beta_tubulin"/>
    <property type="match status" value="1"/>
</dbReference>
<dbReference type="FunFam" id="1.10.287.600:FF:000002">
    <property type="entry name" value="Tubulin beta chain"/>
    <property type="match status" value="1"/>
</dbReference>
<dbReference type="FunFam" id="3.30.1330.20:FF:000002">
    <property type="entry name" value="Tubulin beta chain"/>
    <property type="match status" value="1"/>
</dbReference>
<dbReference type="FunFam" id="3.40.50.1440:FF:000005">
    <property type="entry name" value="Tubulin beta chain"/>
    <property type="match status" value="1"/>
</dbReference>
<dbReference type="Gene3D" id="1.10.287.600">
    <property type="entry name" value="Helix hairpin bin"/>
    <property type="match status" value="1"/>
</dbReference>
<dbReference type="Gene3D" id="3.30.1330.20">
    <property type="entry name" value="Tubulin/FtsZ, C-terminal domain"/>
    <property type="match status" value="1"/>
</dbReference>
<dbReference type="Gene3D" id="3.40.50.1440">
    <property type="entry name" value="Tubulin/FtsZ, GTPase domain"/>
    <property type="match status" value="1"/>
</dbReference>
<dbReference type="InterPro" id="IPR013838">
    <property type="entry name" value="Beta-tubulin_BS"/>
</dbReference>
<dbReference type="InterPro" id="IPR002453">
    <property type="entry name" value="Beta_tubulin"/>
</dbReference>
<dbReference type="InterPro" id="IPR008280">
    <property type="entry name" value="Tub_FtsZ_C"/>
</dbReference>
<dbReference type="InterPro" id="IPR000217">
    <property type="entry name" value="Tubulin"/>
</dbReference>
<dbReference type="InterPro" id="IPR037103">
    <property type="entry name" value="Tubulin/FtsZ-like_C"/>
</dbReference>
<dbReference type="InterPro" id="IPR018316">
    <property type="entry name" value="Tubulin/FtsZ_2-layer-sand-dom"/>
</dbReference>
<dbReference type="InterPro" id="IPR036525">
    <property type="entry name" value="Tubulin/FtsZ_GTPase_sf"/>
</dbReference>
<dbReference type="InterPro" id="IPR023123">
    <property type="entry name" value="Tubulin_C"/>
</dbReference>
<dbReference type="InterPro" id="IPR017975">
    <property type="entry name" value="Tubulin_CS"/>
</dbReference>
<dbReference type="InterPro" id="IPR003008">
    <property type="entry name" value="Tubulin_FtsZ_GTPase"/>
</dbReference>
<dbReference type="PANTHER" id="PTHR11588">
    <property type="entry name" value="TUBULIN"/>
    <property type="match status" value="1"/>
</dbReference>
<dbReference type="Pfam" id="PF00091">
    <property type="entry name" value="Tubulin"/>
    <property type="match status" value="1"/>
</dbReference>
<dbReference type="Pfam" id="PF03953">
    <property type="entry name" value="Tubulin_C"/>
    <property type="match status" value="1"/>
</dbReference>
<dbReference type="PRINTS" id="PR01163">
    <property type="entry name" value="BETATUBULIN"/>
</dbReference>
<dbReference type="PRINTS" id="PR01161">
    <property type="entry name" value="TUBULIN"/>
</dbReference>
<dbReference type="SMART" id="SM00864">
    <property type="entry name" value="Tubulin"/>
    <property type="match status" value="1"/>
</dbReference>
<dbReference type="SMART" id="SM00865">
    <property type="entry name" value="Tubulin_C"/>
    <property type="match status" value="1"/>
</dbReference>
<dbReference type="SUPFAM" id="SSF55307">
    <property type="entry name" value="Tubulin C-terminal domain-like"/>
    <property type="match status" value="1"/>
</dbReference>
<dbReference type="SUPFAM" id="SSF52490">
    <property type="entry name" value="Tubulin nucleotide-binding domain-like"/>
    <property type="match status" value="1"/>
</dbReference>
<dbReference type="PROSITE" id="PS00227">
    <property type="entry name" value="TUBULIN"/>
    <property type="match status" value="1"/>
</dbReference>
<dbReference type="PROSITE" id="PS00228">
    <property type="entry name" value="TUBULIN_B_AUTOREG"/>
    <property type="match status" value="1"/>
</dbReference>
<comment type="function">
    <text>Tubulin is the major constituent of microtubules, a cylinder consisting of laterally associated linear protofilaments composed of alpha- and beta-tubulin heterodimers. Microtubules grow by the addition of GTP-tubulin dimers to the microtubule end, where a stabilizing cap forms. Below the cap, tubulin dimers are in GDP-bound state, owing to GTPase activity of alpha-tubulin.</text>
</comment>
<comment type="cofactor">
    <cofactor evidence="1">
        <name>Mg(2+)</name>
        <dbReference type="ChEBI" id="CHEBI:18420"/>
    </cofactor>
</comment>
<comment type="subunit">
    <text>Dimer of alpha and beta chains. A typical microtubule is a hollow water-filled tube with an outer diameter of 25 nm and an inner diameter of 15 nM. Alpha-beta heterodimers associate head-to-tail to form protofilaments running lengthwise along the microtubule wall with the beta-tubulin subunit facing the microtubule plus end conferring a structural polarity. Microtubules usually have 13 protofilaments but different protofilament numbers can be found in some organisms and specialized cells.</text>
</comment>
<comment type="subcellular location">
    <subcellularLocation>
        <location>Cytoplasm</location>
        <location>Cytoskeleton</location>
    </subcellularLocation>
</comment>
<comment type="tissue specificity">
    <text evidence="3">Expressed in roots, leaf sheaths, and suspension cultured cells.</text>
</comment>
<comment type="induction">
    <text evidence="3 4">By gibberellin. Down-regulated by abscisic acid (ABA).</text>
</comment>
<comment type="similarity">
    <text evidence="5">Belongs to the tubulin family.</text>
</comment>
<name>TBB7_ORYSJ</name>
<reference key="1">
    <citation type="journal article" date="1995" name="DNA Res.">
        <title>cDNA sequences of three kinds of beta-tubulins from rice.</title>
        <authorList>
            <person name="Koga-Ban Y."/>
            <person name="Niki T."/>
            <person name="Nagamura Y."/>
            <person name="Sasaki T."/>
            <person name="Minobe Y."/>
        </authorList>
    </citation>
    <scope>NUCLEOTIDE SEQUENCE [MRNA]</scope>
    <scope>INDUCTION</scope>
    <source>
        <strain>cv. Nipponbare</strain>
        <tissue>Root</tissue>
    </source>
</reference>
<reference key="2">
    <citation type="journal article" date="2005" name="Genome Res.">
        <title>Sequence, annotation, and analysis of synteny between rice chromosome 3 and diverged grass species.</title>
        <authorList>
            <consortium name="The rice chromosome 3 sequencing consortium"/>
            <person name="Buell C.R."/>
            <person name="Yuan Q."/>
            <person name="Ouyang S."/>
            <person name="Liu J."/>
            <person name="Zhu W."/>
            <person name="Wang A."/>
            <person name="Maiti R."/>
            <person name="Haas B."/>
            <person name="Wortman J."/>
            <person name="Pertea M."/>
            <person name="Jones K.M."/>
            <person name="Kim M."/>
            <person name="Overton L."/>
            <person name="Tsitrin T."/>
            <person name="Fadrosh D."/>
            <person name="Bera J."/>
            <person name="Weaver B."/>
            <person name="Jin S."/>
            <person name="Johri S."/>
            <person name="Reardon M."/>
            <person name="Webb K."/>
            <person name="Hill J."/>
            <person name="Moffat K."/>
            <person name="Tallon L."/>
            <person name="Van Aken S."/>
            <person name="Lewis M."/>
            <person name="Utterback T."/>
            <person name="Feldblyum T."/>
            <person name="Zismann V."/>
            <person name="Iobst S."/>
            <person name="Hsiao J."/>
            <person name="de Vazeille A.R."/>
            <person name="Salzberg S.L."/>
            <person name="White O."/>
            <person name="Fraser C.M."/>
            <person name="Yu Y."/>
            <person name="Kim H."/>
            <person name="Rambo T."/>
            <person name="Currie J."/>
            <person name="Collura K."/>
            <person name="Kernodle-Thompson S."/>
            <person name="Wei F."/>
            <person name="Kudrna K."/>
            <person name="Ammiraju J.S.S."/>
            <person name="Luo M."/>
            <person name="Goicoechea J.L."/>
            <person name="Wing R.A."/>
            <person name="Henry D."/>
            <person name="Oates R."/>
            <person name="Palmer M."/>
            <person name="Pries G."/>
            <person name="Saski C."/>
            <person name="Simmons J."/>
            <person name="Soderlund C."/>
            <person name="Nelson W."/>
            <person name="de la Bastide M."/>
            <person name="Spiegel L."/>
            <person name="Nascimento L."/>
            <person name="Huang E."/>
            <person name="Preston R."/>
            <person name="Zutavern T."/>
            <person name="Palmer L."/>
            <person name="O'Shaughnessy A."/>
            <person name="Dike S."/>
            <person name="McCombie W.R."/>
            <person name="Minx P."/>
            <person name="Cordum H."/>
            <person name="Wilson R."/>
            <person name="Jin W."/>
            <person name="Lee H.R."/>
            <person name="Jiang J."/>
            <person name="Jackson S."/>
        </authorList>
    </citation>
    <scope>NUCLEOTIDE SEQUENCE [LARGE SCALE GENOMIC DNA]</scope>
    <source>
        <strain>cv. Nipponbare</strain>
    </source>
</reference>
<reference key="3">
    <citation type="journal article" date="2005" name="Nature">
        <title>The map-based sequence of the rice genome.</title>
        <authorList>
            <consortium name="International rice genome sequencing project (IRGSP)"/>
        </authorList>
    </citation>
    <scope>NUCLEOTIDE SEQUENCE [LARGE SCALE GENOMIC DNA]</scope>
    <source>
        <strain>cv. Nipponbare</strain>
    </source>
</reference>
<reference key="4">
    <citation type="journal article" date="2008" name="Nucleic Acids Res.">
        <title>The rice annotation project database (RAP-DB): 2008 update.</title>
        <authorList>
            <consortium name="The rice annotation project (RAP)"/>
        </authorList>
    </citation>
    <scope>GENOME REANNOTATION</scope>
    <source>
        <strain>cv. Nipponbare</strain>
    </source>
</reference>
<reference key="5">
    <citation type="journal article" date="2013" name="Rice">
        <title>Improvement of the Oryza sativa Nipponbare reference genome using next generation sequence and optical map data.</title>
        <authorList>
            <person name="Kawahara Y."/>
            <person name="de la Bastide M."/>
            <person name="Hamilton J.P."/>
            <person name="Kanamori H."/>
            <person name="McCombie W.R."/>
            <person name="Ouyang S."/>
            <person name="Schwartz D.C."/>
            <person name="Tanaka T."/>
            <person name="Wu J."/>
            <person name="Zhou S."/>
            <person name="Childs K.L."/>
            <person name="Davidson R.M."/>
            <person name="Lin H."/>
            <person name="Quesada-Ocampo L."/>
            <person name="Vaillancourt B."/>
            <person name="Sakai H."/>
            <person name="Lee S.S."/>
            <person name="Kim J."/>
            <person name="Numa H."/>
            <person name="Itoh T."/>
            <person name="Buell C.R."/>
            <person name="Matsumoto T."/>
        </authorList>
    </citation>
    <scope>GENOME REANNOTATION</scope>
    <source>
        <strain>cv. Nipponbare</strain>
    </source>
</reference>
<reference key="6">
    <citation type="journal article" date="2003" name="Science">
        <title>Collection, mapping, and annotation of over 28,000 cDNA clones from japonica rice.</title>
        <authorList>
            <consortium name="The rice full-length cDNA consortium"/>
        </authorList>
    </citation>
    <scope>NUCLEOTIDE SEQUENCE [LARGE SCALE MRNA]</scope>
    <source>
        <strain>cv. Nipponbare</strain>
    </source>
</reference>
<reference key="7">
    <citation type="journal article" date="2003" name="Plant Cell Physiol.">
        <title>Expression analyses of beta-tubulin isotype genes in rice.</title>
        <authorList>
            <person name="Yoshikawa M."/>
            <person name="Yang G."/>
            <person name="Kawaguchi K."/>
            <person name="Komatsu S."/>
        </authorList>
    </citation>
    <scope>TISSUE SPECIFICITY</scope>
    <scope>INDUCTION</scope>
    <scope>NOMENCLATURE</scope>
</reference>